<proteinExistence type="evidence at protein level"/>
<name>SYR_ENCCU</name>
<protein>
    <recommendedName>
        <fullName>Arginine--tRNA ligase</fullName>
        <ecNumber>6.1.1.19</ecNumber>
    </recommendedName>
    <alternativeName>
        <fullName>Arginyl-tRNA synthetase</fullName>
        <shortName>ArgRS</shortName>
    </alternativeName>
</protein>
<reference key="1">
    <citation type="journal article" date="2001" name="Nature">
        <title>Genome sequence and gene compaction of the eukaryote parasite Encephalitozoon cuniculi.</title>
        <authorList>
            <person name="Katinka M.D."/>
            <person name="Duprat S."/>
            <person name="Cornillot E."/>
            <person name="Metenier G."/>
            <person name="Thomarat F."/>
            <person name="Prensier G."/>
            <person name="Barbe V."/>
            <person name="Peyretaillade E."/>
            <person name="Brottier P."/>
            <person name="Wincker P."/>
            <person name="Delbac F."/>
            <person name="El Alaoui H."/>
            <person name="Peyret P."/>
            <person name="Saurin W."/>
            <person name="Gouy M."/>
            <person name="Weissenbach J."/>
            <person name="Vivares C.P."/>
        </authorList>
    </citation>
    <scope>NUCLEOTIDE SEQUENCE [LARGE SCALE GENOMIC DNA]</scope>
    <source>
        <strain>GB-M1</strain>
    </source>
</reference>
<reference key="2">
    <citation type="journal article" date="2006" name="Proteomics">
        <title>Proteomic analysis of the eukaryotic parasite Encephalitozoon cuniculi (microsporidia): a reference map for proteins expressed in late sporogonial stages.</title>
        <authorList>
            <person name="Brosson D."/>
            <person name="Kuhn L."/>
            <person name="Delbac F."/>
            <person name="Garin J."/>
            <person name="Vivares C.P."/>
            <person name="Texier C."/>
        </authorList>
    </citation>
    <scope>IDENTIFICATION BY MASS SPECTROMETRY [LARGE SCALE ANALYSIS]</scope>
    <scope>DEVELOPMENTAL STAGE</scope>
</reference>
<comment type="catalytic activity">
    <reaction>
        <text>tRNA(Arg) + L-arginine + ATP = L-arginyl-tRNA(Arg) + AMP + diphosphate</text>
        <dbReference type="Rhea" id="RHEA:20301"/>
        <dbReference type="Rhea" id="RHEA-COMP:9658"/>
        <dbReference type="Rhea" id="RHEA-COMP:9673"/>
        <dbReference type="ChEBI" id="CHEBI:30616"/>
        <dbReference type="ChEBI" id="CHEBI:32682"/>
        <dbReference type="ChEBI" id="CHEBI:33019"/>
        <dbReference type="ChEBI" id="CHEBI:78442"/>
        <dbReference type="ChEBI" id="CHEBI:78513"/>
        <dbReference type="ChEBI" id="CHEBI:456215"/>
        <dbReference type="EC" id="6.1.1.19"/>
    </reaction>
</comment>
<comment type="subunit">
    <text evidence="1">Monomer.</text>
</comment>
<comment type="developmental stage">
    <text evidence="2">Expressed in late sporogonial stages.</text>
</comment>
<comment type="similarity">
    <text evidence="3">Belongs to the class-I aminoacyl-tRNA synthetase family.</text>
</comment>
<feature type="chain" id="PRO_0000383142" description="Arginine--tRNA ligase">
    <location>
        <begin position="1"/>
        <end position="563"/>
    </location>
</feature>
<gene>
    <name type="ordered locus">ECU08_0550</name>
</gene>
<sequence>MFNELFRKVVEAISKASKFTPEEIAACMERSYQPKKPNVTLFLDRISPSPQEDAKELLETLAGANIELIENLAIRKSSVCCDINKRAILKDVLGYIQKNREIFGNNNVGKGKRMVVEYSSPNIAKIFHIGHLRTTVLGQFIVNLLRASGYETTSINYFGDWGKQFGFVLLGYSKYGSEEELEKDPLKHLFNVYVKISADAEKNPDVDSEAKEIFRMMEEDKDEWCMNLWRRFRELSIEKYKVLYKRLNVEFDVYSGESMYNEKGKSIVETSKQIKTDEDGSKVFDLGKAGKVLVMKNDGTTLYITRDIAAAIERLEEYSPEKIIYVVSSEQNKHFEDLFGVLEMLGYDKDKFQHVSYGLVAGMSTRAGKVQLLEDIIQESTEVMKNVMMSDNNKGSFTAAEMDQTAEVLAISTLLVMDFTARRVKGYEFDIEKRARNTSGTGLYLQYAHCRLRSIETKNSNVDYNDIETIDFELIHVPKVLNLVYKLLWFEHVVEKCLEDYEPSRIVTYLQDLASSINGAINILRVLGVDKELARARLLVLSSARIVLHNGLRILGATPLNKM</sequence>
<organism>
    <name type="scientific">Encephalitozoon cuniculi (strain GB-M1)</name>
    <name type="common">Microsporidian parasite</name>
    <dbReference type="NCBI Taxonomy" id="284813"/>
    <lineage>
        <taxon>Eukaryota</taxon>
        <taxon>Fungi</taxon>
        <taxon>Fungi incertae sedis</taxon>
        <taxon>Microsporidia</taxon>
        <taxon>Unikaryonidae</taxon>
        <taxon>Encephalitozoon</taxon>
    </lineage>
</organism>
<keyword id="KW-0030">Aminoacyl-tRNA synthetase</keyword>
<keyword id="KW-0067">ATP-binding</keyword>
<keyword id="KW-0436">Ligase</keyword>
<keyword id="KW-0547">Nucleotide-binding</keyword>
<keyword id="KW-0648">Protein biosynthesis</keyword>
<keyword id="KW-1185">Reference proteome</keyword>
<accession>Q8SRD8</accession>
<evidence type="ECO:0000250" key="1"/>
<evidence type="ECO:0000269" key="2">
    <source>
    </source>
</evidence>
<evidence type="ECO:0000305" key="3"/>
<dbReference type="EC" id="6.1.1.19"/>
<dbReference type="EMBL" id="AL590448">
    <property type="protein sequence ID" value="CAD26360.1"/>
    <property type="molecule type" value="Genomic_DNA"/>
</dbReference>
<dbReference type="RefSeq" id="NP_597184.1">
    <property type="nucleotide sequence ID" value="NM_001041793.1"/>
</dbReference>
<dbReference type="SMR" id="Q8SRD8"/>
<dbReference type="FunCoup" id="Q8SRD8">
    <property type="interactions" value="181"/>
</dbReference>
<dbReference type="STRING" id="284813.Q8SRD8"/>
<dbReference type="GeneID" id="859606"/>
<dbReference type="KEGG" id="ecu:ECU08_0550"/>
<dbReference type="VEuPathDB" id="MicrosporidiaDB:ECU08_0550"/>
<dbReference type="HOGENOM" id="CLU_006406_6_2_1"/>
<dbReference type="InParanoid" id="Q8SRD8"/>
<dbReference type="OMA" id="YLTRDIC"/>
<dbReference type="OrthoDB" id="68056at2759"/>
<dbReference type="Proteomes" id="UP000000819">
    <property type="component" value="Chromosome VIII"/>
</dbReference>
<dbReference type="GO" id="GO:0005739">
    <property type="term" value="C:mitochondrion"/>
    <property type="evidence" value="ECO:0007669"/>
    <property type="project" value="TreeGrafter"/>
</dbReference>
<dbReference type="GO" id="GO:0004814">
    <property type="term" value="F:arginine-tRNA ligase activity"/>
    <property type="evidence" value="ECO:0007669"/>
    <property type="project" value="UniProtKB-EC"/>
</dbReference>
<dbReference type="GO" id="GO:0005524">
    <property type="term" value="F:ATP binding"/>
    <property type="evidence" value="ECO:0007669"/>
    <property type="project" value="UniProtKB-KW"/>
</dbReference>
<dbReference type="GO" id="GO:0006420">
    <property type="term" value="P:arginyl-tRNA aminoacylation"/>
    <property type="evidence" value="ECO:0007669"/>
    <property type="project" value="InterPro"/>
</dbReference>
<dbReference type="GO" id="GO:0032543">
    <property type="term" value="P:mitochondrial translation"/>
    <property type="evidence" value="ECO:0007669"/>
    <property type="project" value="TreeGrafter"/>
</dbReference>
<dbReference type="FunFam" id="1.10.730.10:FF:000006">
    <property type="entry name" value="Arginyl-tRNA synthetase 2, mitochondrial"/>
    <property type="match status" value="1"/>
</dbReference>
<dbReference type="FunFam" id="3.40.50.620:FF:000058">
    <property type="entry name" value="Mitochondrial arginyl-tRNA synthetase"/>
    <property type="match status" value="1"/>
</dbReference>
<dbReference type="Gene3D" id="3.40.50.620">
    <property type="entry name" value="HUPs"/>
    <property type="match status" value="1"/>
</dbReference>
<dbReference type="Gene3D" id="1.10.730.10">
    <property type="entry name" value="Isoleucyl-tRNA Synthetase, Domain 1"/>
    <property type="match status" value="1"/>
</dbReference>
<dbReference type="InterPro" id="IPR001412">
    <property type="entry name" value="aa-tRNA-synth_I_CS"/>
</dbReference>
<dbReference type="InterPro" id="IPR001278">
    <property type="entry name" value="Arg-tRNA-ligase"/>
</dbReference>
<dbReference type="InterPro" id="IPR035684">
    <property type="entry name" value="ArgRS_core"/>
</dbReference>
<dbReference type="InterPro" id="IPR008909">
    <property type="entry name" value="DALR_anticod-bd"/>
</dbReference>
<dbReference type="InterPro" id="IPR014729">
    <property type="entry name" value="Rossmann-like_a/b/a_fold"/>
</dbReference>
<dbReference type="InterPro" id="IPR009080">
    <property type="entry name" value="tRNAsynth_Ia_anticodon-bd"/>
</dbReference>
<dbReference type="NCBIfam" id="TIGR00456">
    <property type="entry name" value="argS"/>
    <property type="match status" value="1"/>
</dbReference>
<dbReference type="PANTHER" id="PTHR11956:SF11">
    <property type="entry name" value="ARGININE--TRNA LIGASE, MITOCHONDRIAL-RELATED"/>
    <property type="match status" value="1"/>
</dbReference>
<dbReference type="PANTHER" id="PTHR11956">
    <property type="entry name" value="ARGINYL-TRNA SYNTHETASE"/>
    <property type="match status" value="1"/>
</dbReference>
<dbReference type="Pfam" id="PF05746">
    <property type="entry name" value="DALR_1"/>
    <property type="match status" value="1"/>
</dbReference>
<dbReference type="Pfam" id="PF00750">
    <property type="entry name" value="tRNA-synt_1d"/>
    <property type="match status" value="1"/>
</dbReference>
<dbReference type="PRINTS" id="PR01038">
    <property type="entry name" value="TRNASYNTHARG"/>
</dbReference>
<dbReference type="SMART" id="SM00836">
    <property type="entry name" value="DALR_1"/>
    <property type="match status" value="1"/>
</dbReference>
<dbReference type="SUPFAM" id="SSF47323">
    <property type="entry name" value="Anticodon-binding domain of a subclass of class I aminoacyl-tRNA synthetases"/>
    <property type="match status" value="1"/>
</dbReference>
<dbReference type="SUPFAM" id="SSF52374">
    <property type="entry name" value="Nucleotidylyl transferase"/>
    <property type="match status" value="1"/>
</dbReference>
<dbReference type="PROSITE" id="PS00178">
    <property type="entry name" value="AA_TRNA_LIGASE_I"/>
    <property type="match status" value="1"/>
</dbReference>